<accession>Q58DF7</accession>
<sequence length="232" mass="26015">MLGAMFRAGTPMTPNLNPEGGGHYFIDRDGKAFRHILNFLRLGRLDLPLGYGETALLRAEADFYQIRPLLDALRELEASRGTPAPTAALLHADVDSSPRLVHFSARRGPHHYELSSVQVDTFRANLFCTDPECLGALRARFGVTNEDRAEGGPHFRLEWAPRPAELPEVEYRRLGLQPLWTGAPGEPRDVVGTPSFLEEVLRVALEHGFRLDSVFPDPEDLLNSRSLRFVRH</sequence>
<dbReference type="EMBL" id="BT021640">
    <property type="protein sequence ID" value="AAX46487.1"/>
    <property type="status" value="ALT_SEQ"/>
    <property type="molecule type" value="mRNA"/>
</dbReference>
<dbReference type="RefSeq" id="NP_001030498.2">
    <property type="nucleotide sequence ID" value="NM_001035421.2"/>
</dbReference>
<dbReference type="SMR" id="Q58DF7"/>
<dbReference type="FunCoup" id="Q58DF7">
    <property type="interactions" value="136"/>
</dbReference>
<dbReference type="PaxDb" id="9913-ENSBTAP00000013923"/>
<dbReference type="GeneID" id="539167"/>
<dbReference type="KEGG" id="bta:539167"/>
<dbReference type="CTD" id="147040"/>
<dbReference type="eggNOG" id="KOG2723">
    <property type="taxonomic scope" value="Eukaryota"/>
</dbReference>
<dbReference type="InParanoid" id="Q58DF7"/>
<dbReference type="OrthoDB" id="2414723at2759"/>
<dbReference type="UniPathway" id="UPA00143"/>
<dbReference type="Proteomes" id="UP000009136">
    <property type="component" value="Unplaced"/>
</dbReference>
<dbReference type="GO" id="GO:0016740">
    <property type="term" value="F:transferase activity"/>
    <property type="evidence" value="ECO:0007669"/>
    <property type="project" value="UniProtKB-KW"/>
</dbReference>
<dbReference type="GO" id="GO:0045666">
    <property type="term" value="P:positive regulation of neuron differentiation"/>
    <property type="evidence" value="ECO:0000318"/>
    <property type="project" value="GO_Central"/>
</dbReference>
<dbReference type="GO" id="GO:0051260">
    <property type="term" value="P:protein homooligomerization"/>
    <property type="evidence" value="ECO:0007669"/>
    <property type="project" value="InterPro"/>
</dbReference>
<dbReference type="GO" id="GO:0016567">
    <property type="term" value="P:protein ubiquitination"/>
    <property type="evidence" value="ECO:0007669"/>
    <property type="project" value="UniProtKB-UniPathway"/>
</dbReference>
<dbReference type="FunFam" id="3.30.710.10:FF:000121">
    <property type="entry name" value="BTB/POZ domain-containing protein KCTD11"/>
    <property type="match status" value="1"/>
</dbReference>
<dbReference type="Gene3D" id="3.30.710.10">
    <property type="entry name" value="Potassium Channel Kv1.1, Chain A"/>
    <property type="match status" value="1"/>
</dbReference>
<dbReference type="InterPro" id="IPR045763">
    <property type="entry name" value="KCTD11/21_C"/>
</dbReference>
<dbReference type="InterPro" id="IPR011333">
    <property type="entry name" value="SKP1/BTB/POZ_sf"/>
</dbReference>
<dbReference type="InterPro" id="IPR003131">
    <property type="entry name" value="T1-type_BTB"/>
</dbReference>
<dbReference type="PANTHER" id="PTHR14499:SF7">
    <property type="entry name" value="BTB_POZ DOMAIN-CONTAINING PROTEIN KCTD11"/>
    <property type="match status" value="1"/>
</dbReference>
<dbReference type="PANTHER" id="PTHR14499">
    <property type="entry name" value="POTASSIUM CHANNEL TETRAMERIZATION DOMAIN-CONTAINING"/>
    <property type="match status" value="1"/>
</dbReference>
<dbReference type="Pfam" id="PF02214">
    <property type="entry name" value="BTB_2"/>
    <property type="match status" value="1"/>
</dbReference>
<dbReference type="Pfam" id="PF19329">
    <property type="entry name" value="KCTD11_21_C"/>
    <property type="match status" value="1"/>
</dbReference>
<dbReference type="SUPFAM" id="SSF54695">
    <property type="entry name" value="POZ domain"/>
    <property type="match status" value="1"/>
</dbReference>
<comment type="function">
    <text evidence="2">Plays a role as a marker and a regulator of neuronal differentiation; Up-regulated by a variety of neurogenic signals, such as retinoic acid, epidermal growth factor/EGF and NGFB/nerve growth factor. Induces apoptosis, growth arrest and the expression of cyclin-dependent kinase inhibitor CDKN1B. Plays a role as a tumor repressor and inhibits cell growth and tumorigenicity of medulloblastoma (MDB). Acts as a probable substrate-specific adapter for a BCR (BTB-CUL3-RBX1) E3 ubiquitin-protein ligase complex towards HDAC1. Functions as antagonist of the Hedgehog pathway on cell proliferation and differentiation by affecting the nuclear transfer of transcription factor GLI1, thus maintaining cerebellar granule cells in undifferentiated state, this effect probably occurs via HDAC1 down-regulation, keeping GLI1 acetylated and inactive (By similarity).</text>
</comment>
<comment type="pathway">
    <text>Protein modification; protein ubiquitination.</text>
</comment>
<comment type="subunit">
    <text evidence="2">Homopentamer. Interacts with KCTD6 and KCTD21; KCTD11 and KCTD6 or KCTD21 may associate in pentameric assemblies. Component of the BCR(KCTD11) E3 ubiquitin ligase complex, at least composed of CUL3 and KCTD11 and RBX1. Interacts (via BTB domain) with CUL3; initially a 4:4 stoichiometry has been reported, however, electron microscopy revealed pentameric states of the BTB domain.</text>
</comment>
<comment type="domain">
    <text evidence="1">When BTB domain is deleted, growth-suppressing properties are lost.</text>
</comment>
<comment type="sequence caution" evidence="3">
    <conflict type="erroneous termination">
        <sequence resource="EMBL-CDS" id="AAX46487"/>
    </conflict>
    <text>Truncated C-terminus.</text>
</comment>
<feature type="chain" id="PRO_0000248590" description="BTB/POZ domain-containing protein KCTD11">
    <location>
        <begin position="1"/>
        <end position="232"/>
    </location>
</feature>
<feature type="domain" description="BTB">
    <location>
        <begin position="1"/>
        <end position="49"/>
    </location>
</feature>
<gene>
    <name type="primary">KCTD11</name>
</gene>
<keyword id="KW-0131">Cell cycle</keyword>
<keyword id="KW-0217">Developmental protein</keyword>
<keyword id="KW-0341">Growth regulation</keyword>
<keyword id="KW-1185">Reference proteome</keyword>
<keyword id="KW-0808">Transferase</keyword>
<keyword id="KW-0043">Tumor suppressor</keyword>
<keyword id="KW-0833">Ubl conjugation pathway</keyword>
<organism>
    <name type="scientific">Bos taurus</name>
    <name type="common">Bovine</name>
    <dbReference type="NCBI Taxonomy" id="9913"/>
    <lineage>
        <taxon>Eukaryota</taxon>
        <taxon>Metazoa</taxon>
        <taxon>Chordata</taxon>
        <taxon>Craniata</taxon>
        <taxon>Vertebrata</taxon>
        <taxon>Euteleostomi</taxon>
        <taxon>Mammalia</taxon>
        <taxon>Eutheria</taxon>
        <taxon>Laurasiatheria</taxon>
        <taxon>Artiodactyla</taxon>
        <taxon>Ruminantia</taxon>
        <taxon>Pecora</taxon>
        <taxon>Bovidae</taxon>
        <taxon>Bovinae</taxon>
        <taxon>Bos</taxon>
    </lineage>
</organism>
<proteinExistence type="evidence at transcript level"/>
<protein>
    <recommendedName>
        <fullName>BTB/POZ domain-containing protein KCTD11</fullName>
    </recommendedName>
    <alternativeName>
        <fullName evidence="3">KCASH1 protein</fullName>
    </alternativeName>
    <alternativeName>
        <fullName>Potassium channel tetramerization domain-containing protein 11</fullName>
    </alternativeName>
    <alternativeName>
        <fullName evidence="3">RING-type E3 ubiquitin transferase subunit KCTD11</fullName>
    </alternativeName>
</protein>
<name>KCD11_BOVIN</name>
<evidence type="ECO:0000250" key="1"/>
<evidence type="ECO:0000250" key="2">
    <source>
        <dbReference type="UniProtKB" id="Q693B1"/>
    </source>
</evidence>
<evidence type="ECO:0000305" key="3"/>
<reference key="1">
    <citation type="journal article" date="2005" name="BMC Genomics">
        <title>Characterization of 954 bovine full-CDS cDNA sequences.</title>
        <authorList>
            <person name="Harhay G.P."/>
            <person name="Sonstegard T.S."/>
            <person name="Keele J.W."/>
            <person name="Heaton M.P."/>
            <person name="Clawson M.L."/>
            <person name="Snelling W.M."/>
            <person name="Wiedmann R.T."/>
            <person name="Van Tassell C.P."/>
            <person name="Smith T.P.L."/>
        </authorList>
    </citation>
    <scope>NUCLEOTIDE SEQUENCE [LARGE SCALE MRNA]</scope>
</reference>